<keyword id="KW-0150">Chloroplast</keyword>
<keyword id="KW-0249">Electron transport</keyword>
<keyword id="KW-0349">Heme</keyword>
<keyword id="KW-0408">Iron</keyword>
<keyword id="KW-0472">Membrane</keyword>
<keyword id="KW-0479">Metal-binding</keyword>
<keyword id="KW-0602">Photosynthesis</keyword>
<keyword id="KW-0934">Plastid</keyword>
<keyword id="KW-1185">Reference proteome</keyword>
<keyword id="KW-0793">Thylakoid</keyword>
<keyword id="KW-0812">Transmembrane</keyword>
<keyword id="KW-1133">Transmembrane helix</keyword>
<keyword id="KW-0813">Transport</keyword>
<comment type="function">
    <text evidence="1">Component of the cytochrome b6-f complex, which mediates electron transfer between photosystem II (PSII) and photosystem I (PSI), cyclic electron flow around PSI, and state transitions.</text>
</comment>
<comment type="cofactor">
    <cofactor evidence="1">
        <name>heme b</name>
        <dbReference type="ChEBI" id="CHEBI:60344"/>
    </cofactor>
    <text evidence="1">Binds 2 heme b groups non-covalently with two histidine residues as axial ligands.</text>
</comment>
<comment type="cofactor">
    <cofactor evidence="1">
        <name>heme c</name>
        <dbReference type="ChEBI" id="CHEBI:61717"/>
    </cofactor>
    <text evidence="1">Binds one heme group covalently by a single cysteine link with no axial amino acid ligand. This heme was named heme ci.</text>
</comment>
<comment type="subunit">
    <text evidence="1">The 4 large subunits of the cytochrome b6-f complex are cytochrome b6, subunit IV (17 kDa polypeptide, PetD), cytochrome f and the Rieske protein, while the 4 small subunits are PetG, PetL, PetM and PetN. The complex functions as a dimer.</text>
</comment>
<comment type="subcellular location">
    <subcellularLocation>
        <location evidence="1">Plastid</location>
        <location evidence="1">Chloroplast thylakoid membrane</location>
        <topology evidence="1">Multi-pass membrane protein</topology>
    </subcellularLocation>
</comment>
<comment type="miscellaneous">
    <text evidence="1">Heme 1 (or BH or b566) is high-potential and absorbs at about 566 nm, and heme 2 (or BL or b562) is low-potential and absorbs at about 562 nm.</text>
</comment>
<comment type="similarity">
    <text evidence="1">Belongs to the cytochrome b family. PetB subfamily.</text>
</comment>
<reference key="1">
    <citation type="journal article" date="2007" name="Plant Biotechnol. J.">
        <title>The complete nucleotide sequence of the coffee (Coffea arabica L.) chloroplast genome: organization and implications for biotechnology and phylogenetic relationships amongst angiosperms.</title>
        <authorList>
            <person name="Samson N."/>
            <person name="Bausher M.G."/>
            <person name="Lee S.-B."/>
            <person name="Jansen R.K."/>
            <person name="Daniell H."/>
        </authorList>
    </citation>
    <scope>NUCLEOTIDE SEQUENCE [LARGE SCALE GENOMIC DNA]</scope>
</reference>
<geneLocation type="chloroplast"/>
<proteinExistence type="inferred from homology"/>
<name>CYB6_COFAR</name>
<feature type="chain" id="PRO_0000275311" description="Cytochrome b6">
    <location>
        <begin position="1"/>
        <end position="215"/>
    </location>
</feature>
<feature type="transmembrane region" description="Helical" evidence="1">
    <location>
        <begin position="32"/>
        <end position="52"/>
    </location>
</feature>
<feature type="transmembrane region" description="Helical" evidence="1">
    <location>
        <begin position="90"/>
        <end position="110"/>
    </location>
</feature>
<feature type="transmembrane region" description="Helical" evidence="1">
    <location>
        <begin position="116"/>
        <end position="136"/>
    </location>
</feature>
<feature type="transmembrane region" description="Helical" evidence="1">
    <location>
        <begin position="186"/>
        <end position="206"/>
    </location>
</feature>
<feature type="binding site" description="covalent" evidence="1">
    <location>
        <position position="35"/>
    </location>
    <ligand>
        <name>heme c</name>
        <dbReference type="ChEBI" id="CHEBI:61717"/>
    </ligand>
</feature>
<feature type="binding site" description="axial binding residue" evidence="1">
    <location>
        <position position="86"/>
    </location>
    <ligand>
        <name>heme b</name>
        <dbReference type="ChEBI" id="CHEBI:60344"/>
        <label>2</label>
    </ligand>
    <ligandPart>
        <name>Fe</name>
        <dbReference type="ChEBI" id="CHEBI:18248"/>
    </ligandPart>
</feature>
<feature type="binding site" description="axial binding residue" evidence="1">
    <location>
        <position position="100"/>
    </location>
    <ligand>
        <name>heme b</name>
        <dbReference type="ChEBI" id="CHEBI:60344"/>
        <label>1</label>
    </ligand>
    <ligandPart>
        <name>Fe</name>
        <dbReference type="ChEBI" id="CHEBI:18248"/>
    </ligandPart>
</feature>
<feature type="binding site" description="axial binding residue" evidence="1">
    <location>
        <position position="187"/>
    </location>
    <ligand>
        <name>heme b</name>
        <dbReference type="ChEBI" id="CHEBI:60344"/>
        <label>2</label>
    </ligand>
    <ligandPart>
        <name>Fe</name>
        <dbReference type="ChEBI" id="CHEBI:18248"/>
    </ligandPart>
</feature>
<feature type="binding site" description="axial binding residue" evidence="1">
    <location>
        <position position="202"/>
    </location>
    <ligand>
        <name>heme b</name>
        <dbReference type="ChEBI" id="CHEBI:60344"/>
        <label>1</label>
    </ligand>
    <ligandPart>
        <name>Fe</name>
        <dbReference type="ChEBI" id="CHEBI:18248"/>
    </ligandPart>
</feature>
<organism>
    <name type="scientific">Coffea arabica</name>
    <name type="common">Arabian coffee</name>
    <dbReference type="NCBI Taxonomy" id="13443"/>
    <lineage>
        <taxon>Eukaryota</taxon>
        <taxon>Viridiplantae</taxon>
        <taxon>Streptophyta</taxon>
        <taxon>Embryophyta</taxon>
        <taxon>Tracheophyta</taxon>
        <taxon>Spermatophyta</taxon>
        <taxon>Magnoliopsida</taxon>
        <taxon>eudicotyledons</taxon>
        <taxon>Gunneridae</taxon>
        <taxon>Pentapetalae</taxon>
        <taxon>asterids</taxon>
        <taxon>lamiids</taxon>
        <taxon>Gentianales</taxon>
        <taxon>Rubiaceae</taxon>
        <taxon>Ixoroideae</taxon>
        <taxon>Gardenieae complex</taxon>
        <taxon>Bertiereae - Coffeeae clade</taxon>
        <taxon>Coffeeae</taxon>
        <taxon>Coffea</taxon>
    </lineage>
</organism>
<accession>A0A365</accession>
<protein>
    <recommendedName>
        <fullName evidence="1">Cytochrome b6</fullName>
    </recommendedName>
</protein>
<gene>
    <name evidence="1" type="primary">petB</name>
</gene>
<sequence>MSKVYDWFEERLEIQAIADDITSKYVPPHVNIFYCLGGITLTCFLVQVATGFAMTFYYRPTVTEAFASVQYIMTEANFGWLIRSVHRWSASMMVLMMILHVFRVYLTGGFKKPRELTWVTGVVLAVLTASFGVTGYSLPRDQIGYWAVKIVTGVPEAIPVIGSPLVELLRGSASVGQSTLTRFYSLHTFVLPLLTAVFMLMHFPMIRKQGISGPL</sequence>
<dbReference type="EMBL" id="EF044213">
    <property type="protein sequence ID" value="ABJ89708.1"/>
    <property type="molecule type" value="Genomic_DNA"/>
</dbReference>
<dbReference type="RefSeq" id="YP_817512.1">
    <property type="nucleotide sequence ID" value="NC_008535.1"/>
</dbReference>
<dbReference type="SMR" id="A0A365"/>
<dbReference type="GeneID" id="4421758"/>
<dbReference type="OrthoDB" id="1663482at2759"/>
<dbReference type="Proteomes" id="UP000515148">
    <property type="component" value="Chloroplast Pltd"/>
</dbReference>
<dbReference type="GO" id="GO:0009535">
    <property type="term" value="C:chloroplast thylakoid membrane"/>
    <property type="evidence" value="ECO:0007669"/>
    <property type="project" value="UniProtKB-SubCell"/>
</dbReference>
<dbReference type="GO" id="GO:0045158">
    <property type="term" value="F:electron transporter, transferring electrons within cytochrome b6/f complex of photosystem II activity"/>
    <property type="evidence" value="ECO:0007669"/>
    <property type="project" value="UniProtKB-UniRule"/>
</dbReference>
<dbReference type="GO" id="GO:0046872">
    <property type="term" value="F:metal ion binding"/>
    <property type="evidence" value="ECO:0007669"/>
    <property type="project" value="UniProtKB-KW"/>
</dbReference>
<dbReference type="GO" id="GO:0016491">
    <property type="term" value="F:oxidoreductase activity"/>
    <property type="evidence" value="ECO:0007669"/>
    <property type="project" value="InterPro"/>
</dbReference>
<dbReference type="GO" id="GO:0015979">
    <property type="term" value="P:photosynthesis"/>
    <property type="evidence" value="ECO:0007669"/>
    <property type="project" value="UniProtKB-UniRule"/>
</dbReference>
<dbReference type="GO" id="GO:0022904">
    <property type="term" value="P:respiratory electron transport chain"/>
    <property type="evidence" value="ECO:0007669"/>
    <property type="project" value="InterPro"/>
</dbReference>
<dbReference type="CDD" id="cd00284">
    <property type="entry name" value="Cytochrome_b_N"/>
    <property type="match status" value="1"/>
</dbReference>
<dbReference type="FunFam" id="1.20.810.10:FF:000001">
    <property type="entry name" value="Cytochrome b6"/>
    <property type="match status" value="1"/>
</dbReference>
<dbReference type="Gene3D" id="1.20.810.10">
    <property type="entry name" value="Cytochrome Bc1 Complex, Chain C"/>
    <property type="match status" value="1"/>
</dbReference>
<dbReference type="HAMAP" id="MF_00633">
    <property type="entry name" value="Cytb6_f_cytb6"/>
    <property type="match status" value="1"/>
</dbReference>
<dbReference type="InterPro" id="IPR005797">
    <property type="entry name" value="Cyt_b/b6_N"/>
</dbReference>
<dbReference type="InterPro" id="IPR023530">
    <property type="entry name" value="Cyt_B6_PetB"/>
</dbReference>
<dbReference type="InterPro" id="IPR027387">
    <property type="entry name" value="Cytb/b6-like_sf"/>
</dbReference>
<dbReference type="InterPro" id="IPR048259">
    <property type="entry name" value="Cytochrome_b_N_euk/bac"/>
</dbReference>
<dbReference type="InterPro" id="IPR016174">
    <property type="entry name" value="Di-haem_cyt_TM"/>
</dbReference>
<dbReference type="NCBIfam" id="NF002990">
    <property type="entry name" value="PRK03735.1"/>
    <property type="match status" value="1"/>
</dbReference>
<dbReference type="PANTHER" id="PTHR19271">
    <property type="entry name" value="CYTOCHROME B"/>
    <property type="match status" value="1"/>
</dbReference>
<dbReference type="PANTHER" id="PTHR19271:SF16">
    <property type="entry name" value="CYTOCHROME B"/>
    <property type="match status" value="1"/>
</dbReference>
<dbReference type="Pfam" id="PF00033">
    <property type="entry name" value="Cytochrome_B"/>
    <property type="match status" value="1"/>
</dbReference>
<dbReference type="PIRSF" id="PIRSF000032">
    <property type="entry name" value="Cytochrome_b6"/>
    <property type="match status" value="1"/>
</dbReference>
<dbReference type="SUPFAM" id="SSF81342">
    <property type="entry name" value="Transmembrane di-heme cytochromes"/>
    <property type="match status" value="1"/>
</dbReference>
<dbReference type="PROSITE" id="PS51002">
    <property type="entry name" value="CYTB_NTER"/>
    <property type="match status" value="1"/>
</dbReference>
<evidence type="ECO:0000255" key="1">
    <source>
        <dbReference type="HAMAP-Rule" id="MF_00633"/>
    </source>
</evidence>